<evidence type="ECO:0000255" key="1">
    <source>
        <dbReference type="HAMAP-Rule" id="MF_00332"/>
    </source>
</evidence>
<evidence type="ECO:0000256" key="2">
    <source>
        <dbReference type="SAM" id="MobiDB-lite"/>
    </source>
</evidence>
<feature type="chain" id="PRO_1000059702" description="Chaperone protein DnaK">
    <location>
        <begin position="1"/>
        <end position="636"/>
    </location>
</feature>
<feature type="region of interest" description="Disordered" evidence="2">
    <location>
        <begin position="603"/>
        <end position="636"/>
    </location>
</feature>
<feature type="modified residue" description="Phosphothreonine; by autocatalysis" evidence="1">
    <location>
        <position position="199"/>
    </location>
</feature>
<accession>Q1CMV7</accession>
<accession>C4GNP4</accession>
<reference key="1">
    <citation type="journal article" date="2006" name="J. Bacteriol.">
        <title>Complete genome sequence of Yersinia pestis strains Antiqua and Nepal516: evidence of gene reduction in an emerging pathogen.</title>
        <authorList>
            <person name="Chain P.S.G."/>
            <person name="Hu P."/>
            <person name="Malfatti S.A."/>
            <person name="Radnedge L."/>
            <person name="Larimer F."/>
            <person name="Vergez L.M."/>
            <person name="Worsham P."/>
            <person name="Chu M.C."/>
            <person name="Andersen G.L."/>
        </authorList>
    </citation>
    <scope>NUCLEOTIDE SEQUENCE [LARGE SCALE GENOMIC DNA]</scope>
    <source>
        <strain>Nepal516</strain>
    </source>
</reference>
<reference key="2">
    <citation type="submission" date="2009-04" db="EMBL/GenBank/DDBJ databases">
        <title>Yersinia pestis Nepal516A whole genome shotgun sequencing project.</title>
        <authorList>
            <person name="Plunkett G. III"/>
            <person name="Anderson B.D."/>
            <person name="Baumler D.J."/>
            <person name="Burland V."/>
            <person name="Cabot E.L."/>
            <person name="Glasner J.D."/>
            <person name="Mau B."/>
            <person name="Neeno-Eckwall E."/>
            <person name="Perna N.T."/>
            <person name="Munk A.C."/>
            <person name="Tapia R."/>
            <person name="Green L.D."/>
            <person name="Rogers Y.C."/>
            <person name="Detter J.C."/>
            <person name="Bruce D.C."/>
            <person name="Brettin T.S."/>
        </authorList>
    </citation>
    <scope>NUCLEOTIDE SEQUENCE [LARGE SCALE GENOMIC DNA]</scope>
    <source>
        <strain>Nepal516</strain>
    </source>
</reference>
<sequence>MGKIIGIDLGTTNSCVAIMDGTKARVLENSEGDRTTPSIIAYTQDGETLVGQPAKRQAVTNPQNTLFAIKRLIGRRFQDEEAQRDKDIMPYKIIAADNGDAWLEVKGQKMAPPQISAEVLKKMKKTAEDYLGEPVTEAVITVPAYFNDAQRQATKDAGRIAGLEVKRIINEPTAAALAYGLDKEVGNRTIAVYDLGGGTFDISIIEIDEVDGEKTFEVLATNGDTHLGGEDFDSRLINYLVEEFKKDQGMDLRTDPLAMQRLKEAAEKAKIELSSAQQTDVNLPYITADGSGPKHMNIKVTRAKLESLVEDLVNRSIEPLKVALQDAGLSVSDIQDVILVGGQTRMPMVQKKVADFFGKEPRKDVNPDEAVAIGAAVQGGVLSGEVKDVLLLDVTPLSLGIETMGGVMTPLITKNTTIPTKHSQVFSTAEDNQSAVTIHVLQGERKRAQDNKSLGQFNLDGIQPAPRGMAQIEVTFDIDADGILHVSAKDKNTGREQKITIKASSGLNEEEIQKMVRDAEANAEADRKFEELVQTRNQADHLIHGTRKQLEEAGDKLPAEDKTAIEEAMKGLEAALKGEDKAEIEAKTQALVQVSGKLLEMAQQQQAAAGGDAGDTSAKKEDDVVDAEFEEVKDKK</sequence>
<name>DNAK_YERPN</name>
<organism>
    <name type="scientific">Yersinia pestis bv. Antiqua (strain Nepal516)</name>
    <dbReference type="NCBI Taxonomy" id="377628"/>
    <lineage>
        <taxon>Bacteria</taxon>
        <taxon>Pseudomonadati</taxon>
        <taxon>Pseudomonadota</taxon>
        <taxon>Gammaproteobacteria</taxon>
        <taxon>Enterobacterales</taxon>
        <taxon>Yersiniaceae</taxon>
        <taxon>Yersinia</taxon>
    </lineage>
</organism>
<dbReference type="EMBL" id="CP000305">
    <property type="protein sequence ID" value="ABG16673.1"/>
    <property type="molecule type" value="Genomic_DNA"/>
</dbReference>
<dbReference type="EMBL" id="ACNQ01000006">
    <property type="protein sequence ID" value="EEO78126.1"/>
    <property type="molecule type" value="Genomic_DNA"/>
</dbReference>
<dbReference type="RefSeq" id="WP_002209248.1">
    <property type="nucleotide sequence ID" value="NZ_ACNQ01000006.1"/>
</dbReference>
<dbReference type="SMR" id="Q1CMV7"/>
<dbReference type="GeneID" id="57974141"/>
<dbReference type="KEGG" id="ypn:YPN_0341"/>
<dbReference type="HOGENOM" id="CLU_005965_2_1_6"/>
<dbReference type="Proteomes" id="UP000008936">
    <property type="component" value="Chromosome"/>
</dbReference>
<dbReference type="GO" id="GO:0005524">
    <property type="term" value="F:ATP binding"/>
    <property type="evidence" value="ECO:0007669"/>
    <property type="project" value="UniProtKB-UniRule"/>
</dbReference>
<dbReference type="GO" id="GO:0140662">
    <property type="term" value="F:ATP-dependent protein folding chaperone"/>
    <property type="evidence" value="ECO:0007669"/>
    <property type="project" value="InterPro"/>
</dbReference>
<dbReference type="GO" id="GO:0051082">
    <property type="term" value="F:unfolded protein binding"/>
    <property type="evidence" value="ECO:0007669"/>
    <property type="project" value="InterPro"/>
</dbReference>
<dbReference type="CDD" id="cd10234">
    <property type="entry name" value="ASKHA_NBD_HSP70_DnaK-like"/>
    <property type="match status" value="1"/>
</dbReference>
<dbReference type="FunFam" id="2.60.34.10:FF:000014">
    <property type="entry name" value="Chaperone protein DnaK HSP70"/>
    <property type="match status" value="1"/>
</dbReference>
<dbReference type="FunFam" id="3.30.30.30:FF:000003">
    <property type="entry name" value="Heat shock protein 9"/>
    <property type="match status" value="1"/>
</dbReference>
<dbReference type="FunFam" id="1.20.1270.10:FF:000001">
    <property type="entry name" value="Molecular chaperone DnaK"/>
    <property type="match status" value="1"/>
</dbReference>
<dbReference type="FunFam" id="3.30.420.40:FF:000004">
    <property type="entry name" value="Molecular chaperone DnaK"/>
    <property type="match status" value="1"/>
</dbReference>
<dbReference type="FunFam" id="3.90.640.10:FF:000003">
    <property type="entry name" value="Molecular chaperone DnaK"/>
    <property type="match status" value="1"/>
</dbReference>
<dbReference type="Gene3D" id="1.20.1270.10">
    <property type="match status" value="1"/>
</dbReference>
<dbReference type="Gene3D" id="3.30.420.40">
    <property type="match status" value="2"/>
</dbReference>
<dbReference type="Gene3D" id="3.90.640.10">
    <property type="entry name" value="Actin, Chain A, domain 4"/>
    <property type="match status" value="1"/>
</dbReference>
<dbReference type="Gene3D" id="2.60.34.10">
    <property type="entry name" value="Substrate Binding Domain Of DNAk, Chain A, domain 1"/>
    <property type="match status" value="1"/>
</dbReference>
<dbReference type="HAMAP" id="MF_00332">
    <property type="entry name" value="DnaK"/>
    <property type="match status" value="1"/>
</dbReference>
<dbReference type="InterPro" id="IPR043129">
    <property type="entry name" value="ATPase_NBD"/>
</dbReference>
<dbReference type="InterPro" id="IPR012725">
    <property type="entry name" value="Chaperone_DnaK"/>
</dbReference>
<dbReference type="InterPro" id="IPR018181">
    <property type="entry name" value="Heat_shock_70_CS"/>
</dbReference>
<dbReference type="InterPro" id="IPR029048">
    <property type="entry name" value="HSP70_C_sf"/>
</dbReference>
<dbReference type="InterPro" id="IPR029047">
    <property type="entry name" value="HSP70_peptide-bd_sf"/>
</dbReference>
<dbReference type="InterPro" id="IPR013126">
    <property type="entry name" value="Hsp_70_fam"/>
</dbReference>
<dbReference type="NCBIfam" id="NF001413">
    <property type="entry name" value="PRK00290.1"/>
    <property type="match status" value="1"/>
</dbReference>
<dbReference type="NCBIfam" id="NF003520">
    <property type="entry name" value="PRK05183.1"/>
    <property type="match status" value="1"/>
</dbReference>
<dbReference type="NCBIfam" id="TIGR02350">
    <property type="entry name" value="prok_dnaK"/>
    <property type="match status" value="1"/>
</dbReference>
<dbReference type="PANTHER" id="PTHR19375">
    <property type="entry name" value="HEAT SHOCK PROTEIN 70KDA"/>
    <property type="match status" value="1"/>
</dbReference>
<dbReference type="Pfam" id="PF00012">
    <property type="entry name" value="HSP70"/>
    <property type="match status" value="1"/>
</dbReference>
<dbReference type="PRINTS" id="PR00301">
    <property type="entry name" value="HEATSHOCK70"/>
</dbReference>
<dbReference type="SUPFAM" id="SSF53067">
    <property type="entry name" value="Actin-like ATPase domain"/>
    <property type="match status" value="2"/>
</dbReference>
<dbReference type="SUPFAM" id="SSF100934">
    <property type="entry name" value="Heat shock protein 70kD (HSP70), C-terminal subdomain"/>
    <property type="match status" value="1"/>
</dbReference>
<dbReference type="SUPFAM" id="SSF100920">
    <property type="entry name" value="Heat shock protein 70kD (HSP70), peptide-binding domain"/>
    <property type="match status" value="1"/>
</dbReference>
<dbReference type="PROSITE" id="PS00297">
    <property type="entry name" value="HSP70_1"/>
    <property type="match status" value="1"/>
</dbReference>
<dbReference type="PROSITE" id="PS00329">
    <property type="entry name" value="HSP70_2"/>
    <property type="match status" value="1"/>
</dbReference>
<dbReference type="PROSITE" id="PS01036">
    <property type="entry name" value="HSP70_3"/>
    <property type="match status" value="1"/>
</dbReference>
<protein>
    <recommendedName>
        <fullName evidence="1">Chaperone protein DnaK</fullName>
    </recommendedName>
    <alternativeName>
        <fullName evidence="1">HSP70</fullName>
    </alternativeName>
    <alternativeName>
        <fullName evidence="1">Heat shock 70 kDa protein</fullName>
    </alternativeName>
    <alternativeName>
        <fullName evidence="1">Heat shock protein 70</fullName>
    </alternativeName>
</protein>
<proteinExistence type="inferred from homology"/>
<keyword id="KW-0067">ATP-binding</keyword>
<keyword id="KW-0143">Chaperone</keyword>
<keyword id="KW-0547">Nucleotide-binding</keyword>
<keyword id="KW-0597">Phosphoprotein</keyword>
<keyword id="KW-0346">Stress response</keyword>
<gene>
    <name evidence="1" type="primary">dnaK</name>
    <name type="ordered locus">YPN_0341</name>
    <name type="ORF">YP516_0348</name>
</gene>
<comment type="function">
    <text evidence="1">Acts as a chaperone.</text>
</comment>
<comment type="induction">
    <text evidence="1">By stress conditions e.g. heat shock.</text>
</comment>
<comment type="similarity">
    <text evidence="1">Belongs to the heat shock protein 70 family.</text>
</comment>